<reference evidence="4" key="1">
    <citation type="submission" date="2015-08" db="EMBL/GenBank/DDBJ databases">
        <title>Emergence of novel diverse phylogenomic lineages of EPEC.</title>
        <authorList>
            <person name="Hazen T.H."/>
            <person name="Donnenberg M."/>
            <person name="Nataro J."/>
            <person name="Kaper J."/>
            <person name="Rasko D."/>
        </authorList>
    </citation>
    <scope>NUCLEOTIDE SEQUENCE [LARGE SCALE GENOMIC DNA]</scope>
    <source>
        <strain>102598</strain>
    </source>
</reference>
<reference evidence="5" key="2">
    <citation type="journal article" date="1997" name="Plasmid">
        <title>A novel retron that produces RNA-less msDNA in Escherichia coli using reverse transcriptase.</title>
        <authorList>
            <person name="Lima T.M."/>
            <person name="Lim D."/>
        </authorList>
    </citation>
    <scope>NUCLEOTIDE SEQUENCE [GENOMIC DNA] OF 1-293</scope>
    <source>
        <strain>Clinical strain 110</strain>
    </source>
</reference>
<reference key="3">
    <citation type="journal article" date="2020" name="Cell">
        <title>Bacterial Retrons Function In Anti-Phage Defense.</title>
        <authorList>
            <person name="Millman A."/>
            <person name="Bernheim A."/>
            <person name="Stokar-Avihail A."/>
            <person name="Fedorenko T."/>
            <person name="Voichek M."/>
            <person name="Leavitt A."/>
            <person name="Oppenheimer-Shaanan Y."/>
            <person name="Sorek R."/>
        </authorList>
    </citation>
    <scope>FUNCTION IN ANTIVIRAL DEFENSE</scope>
    <scope>IDENTIFICATION AS A RETRON</scope>
    <source>
        <strain>102598</strain>
    </source>
</reference>
<evidence type="ECO:0000269" key="1">
    <source>
    </source>
</evidence>
<evidence type="ECO:0000303" key="2">
    <source>
    </source>
</evidence>
<evidence type="ECO:0000305" key="3"/>
<evidence type="ECO:0000312" key="4">
    <source>
        <dbReference type="EMBL" id="JHRW01000018"/>
    </source>
</evidence>
<evidence type="ECO:0000312" key="5">
    <source>
        <dbReference type="EMBL" id="U02551"/>
    </source>
</evidence>
<keyword id="KW-0051">Antiviral defense</keyword>
<keyword id="KW-0067">ATP-binding</keyword>
<keyword id="KW-0547">Nucleotide-binding</keyword>
<dbReference type="EMBL" id="JHRW01000018">
    <property type="status" value="NOT_ANNOTATED_CDS"/>
    <property type="molecule type" value="Genomic_DNA"/>
</dbReference>
<dbReference type="EMBL" id="U02551">
    <property type="status" value="NOT_ANNOTATED_CDS"/>
    <property type="molecule type" value="Genomic_DNA"/>
</dbReference>
<dbReference type="SMR" id="P0DV91"/>
<dbReference type="GO" id="GO:0005524">
    <property type="term" value="F:ATP binding"/>
    <property type="evidence" value="ECO:0007669"/>
    <property type="project" value="UniProtKB-KW"/>
</dbReference>
<dbReference type="GO" id="GO:0016887">
    <property type="term" value="F:ATP hydrolysis activity"/>
    <property type="evidence" value="ECO:0007669"/>
    <property type="project" value="InterPro"/>
</dbReference>
<dbReference type="GO" id="GO:0051607">
    <property type="term" value="P:defense response to virus"/>
    <property type="evidence" value="ECO:0007669"/>
    <property type="project" value="UniProtKB-KW"/>
</dbReference>
<dbReference type="GO" id="GO:0000731">
    <property type="term" value="P:DNA synthesis involved in DNA repair"/>
    <property type="evidence" value="ECO:0007669"/>
    <property type="project" value="TreeGrafter"/>
</dbReference>
<dbReference type="GO" id="GO:0006302">
    <property type="term" value="P:double-strand break repair"/>
    <property type="evidence" value="ECO:0007669"/>
    <property type="project" value="TreeGrafter"/>
</dbReference>
<dbReference type="CDD" id="cd00267">
    <property type="entry name" value="ABC_ATPase"/>
    <property type="match status" value="1"/>
</dbReference>
<dbReference type="Gene3D" id="3.40.50.300">
    <property type="entry name" value="P-loop containing nucleotide triphosphate hydrolases"/>
    <property type="match status" value="1"/>
</dbReference>
<dbReference type="InterPro" id="IPR003959">
    <property type="entry name" value="ATPase_AAA_core"/>
</dbReference>
<dbReference type="InterPro" id="IPR027417">
    <property type="entry name" value="P-loop_NTPase"/>
</dbReference>
<dbReference type="InterPro" id="IPR053498">
    <property type="entry name" value="Retron_ATPase"/>
</dbReference>
<dbReference type="NCBIfam" id="NF041760">
    <property type="entry name" value="PtuA"/>
    <property type="match status" value="1"/>
</dbReference>
<dbReference type="PANTHER" id="PTHR32182:SF23">
    <property type="entry name" value="ATP BINDING PROTEIN"/>
    <property type="match status" value="1"/>
</dbReference>
<dbReference type="PANTHER" id="PTHR32182">
    <property type="entry name" value="DNA REPLICATION AND REPAIR PROTEIN RECF"/>
    <property type="match status" value="1"/>
</dbReference>
<dbReference type="Pfam" id="PF13304">
    <property type="entry name" value="AAA_21"/>
    <property type="match status" value="1"/>
</dbReference>
<dbReference type="SUPFAM" id="SSF52540">
    <property type="entry name" value="P-loop containing nucleoside triphosphate hydrolases"/>
    <property type="match status" value="1"/>
</dbReference>
<sequence>MTKQYERKAKGGNLLSAFELYQRNTDNMPGLGEMLVDEWFETCRDYIQDGHVDESGTFRPDNAFYLRRLTLKDFRRFSLLEIKFEEDLTVIIGNNGKGKTSILYAIAKTLSWFVANILKEGGSGQRLSELTDIKNDAENRYADVSSTFFFGKGLKSVPIRLSRSALGTAERRDSEVKPARDLADIWRVINEAKTINLPTFALYNVERSQPFNRNTKDNAGRREERFDAYSQALGGAGRFDHFVEWYIYLHKRTISDISSSIKELEQQVNDLQRSVDGGMVSVKSLLEQMKLKLSEASERNDAAVSSKMVTESVQKSIVEKSICSVVPSISKIWVEMTTGSDLVKVTNDGHDVTIDQLSDGQRVFLSLVADLARRMVMLNPLLENPLEGRGIVLIDEIELHLHPKWQQEVILNLRSVFPNIQFIITTHSPIVLSTIEKRCIREFDPNDDGNQSFLDSPDMQTKGSENAQILEQVMNVHPTPPGIAESHWLGDFELLLLDNSGELDNQSQELYDKIKTHFGIDSAELKKADSLIRINKMKNKINKIRAEKGK</sequence>
<name>ATP78_ECOLX</name>
<gene>
    <name type="ORF">Ga0100609_101823</name>
</gene>
<protein>
    <recommendedName>
        <fullName evidence="2">Retron Ec78 probable ATPase</fullName>
    </recommendedName>
</protein>
<proteinExistence type="evidence at protein level"/>
<accession>P0DV91</accession>
<organism>
    <name type="scientific">Escherichia coli</name>
    <dbReference type="NCBI Taxonomy" id="562"/>
    <lineage>
        <taxon>Bacteria</taxon>
        <taxon>Pseudomonadati</taxon>
        <taxon>Pseudomonadota</taxon>
        <taxon>Gammaproteobacteria</taxon>
        <taxon>Enterobacterales</taxon>
        <taxon>Enterobacteriaceae</taxon>
        <taxon>Escherichia</taxon>
    </lineage>
</organism>
<comment type="function">
    <text evidence="1">Probable ATPase component of antiviral defense system retron Ec78, composed of a non-coding RNA (ncRNA), a reverse transcriptase (RT), this protein and a putative HNH endonuclease. Expression of retron Ec78 confers protection against bacteriophage T5. At multiplicity of infection (MOI) of 0.02 cultures slow growth when infected with T5 but do not collapse, at MOI 2 cultures enter growth stasis.</text>
</comment>
<feature type="chain" id="PRO_0000456024" description="Retron Ec78 probable ATPase">
    <location>
        <begin position="1"/>
        <end position="550"/>
    </location>
</feature>
<feature type="short sequence motif" description="ATP-binding" evidence="3">
    <location>
        <begin position="93"/>
        <end position="100"/>
    </location>
</feature>
<feature type="sequence conflict" description="In Ref. 2; U02551." evidence="3" ref="2">
    <original>S</original>
    <variation>Y</variation>
    <location>
        <position position="16"/>
    </location>
</feature>
<feature type="sequence conflict" description="In Ref. 2; U02551." evidence="3" ref="2">
    <original>TINLPTFALYNVERSQPFNRNTKDNAGRREERFDAYSQALGG</original>
    <variation>QSTCRRLLFTTLSDRNPLTATQKIMPDAEKSVLMPIVKLSV</variation>
    <location>
        <begin position="194"/>
        <end position="235"/>
    </location>
</feature>